<keyword id="KW-0963">Cytoplasm</keyword>
<keyword id="KW-0275">Fatty acid biosynthesis</keyword>
<keyword id="KW-0276">Fatty acid metabolism</keyword>
<keyword id="KW-0444">Lipid biosynthesis</keyword>
<keyword id="KW-0443">Lipid metabolism</keyword>
<keyword id="KW-0460">Magnesium</keyword>
<keyword id="KW-0479">Metal-binding</keyword>
<keyword id="KW-1185">Reference proteome</keyword>
<keyword id="KW-0808">Transferase</keyword>
<dbReference type="EC" id="2.7.8.7" evidence="1"/>
<dbReference type="EMBL" id="AE009948">
    <property type="protein sequence ID" value="AAN00549.1"/>
    <property type="molecule type" value="Genomic_DNA"/>
</dbReference>
<dbReference type="RefSeq" id="NP_688676.1">
    <property type="nucleotide sequence ID" value="NC_004116.1"/>
</dbReference>
<dbReference type="RefSeq" id="WP_000635015.1">
    <property type="nucleotide sequence ID" value="NC_004116.1"/>
</dbReference>
<dbReference type="SMR" id="P63472"/>
<dbReference type="STRING" id="208435.SAG1685"/>
<dbReference type="GeneID" id="66886531"/>
<dbReference type="KEGG" id="sag:SAG1685"/>
<dbReference type="PATRIC" id="fig|208435.3.peg.1694"/>
<dbReference type="HOGENOM" id="CLU_089696_1_2_9"/>
<dbReference type="OrthoDB" id="517356at2"/>
<dbReference type="Proteomes" id="UP000000821">
    <property type="component" value="Chromosome"/>
</dbReference>
<dbReference type="GO" id="GO:0005737">
    <property type="term" value="C:cytoplasm"/>
    <property type="evidence" value="ECO:0007669"/>
    <property type="project" value="UniProtKB-SubCell"/>
</dbReference>
<dbReference type="GO" id="GO:0008897">
    <property type="term" value="F:holo-[acyl-carrier-protein] synthase activity"/>
    <property type="evidence" value="ECO:0007669"/>
    <property type="project" value="UniProtKB-UniRule"/>
</dbReference>
<dbReference type="GO" id="GO:0000287">
    <property type="term" value="F:magnesium ion binding"/>
    <property type="evidence" value="ECO:0007669"/>
    <property type="project" value="UniProtKB-UniRule"/>
</dbReference>
<dbReference type="GO" id="GO:0006633">
    <property type="term" value="P:fatty acid biosynthetic process"/>
    <property type="evidence" value="ECO:0007669"/>
    <property type="project" value="UniProtKB-UniRule"/>
</dbReference>
<dbReference type="Gene3D" id="3.90.470.20">
    <property type="entry name" value="4'-phosphopantetheinyl transferase domain"/>
    <property type="match status" value="1"/>
</dbReference>
<dbReference type="HAMAP" id="MF_00101">
    <property type="entry name" value="AcpS"/>
    <property type="match status" value="1"/>
</dbReference>
<dbReference type="InterPro" id="IPR008278">
    <property type="entry name" value="4-PPantetheinyl_Trfase_dom"/>
</dbReference>
<dbReference type="InterPro" id="IPR037143">
    <property type="entry name" value="4-PPantetheinyl_Trfase_dom_sf"/>
</dbReference>
<dbReference type="InterPro" id="IPR002582">
    <property type="entry name" value="ACPS"/>
</dbReference>
<dbReference type="InterPro" id="IPR004568">
    <property type="entry name" value="Ppantetheine-prot_Trfase_dom"/>
</dbReference>
<dbReference type="NCBIfam" id="TIGR00516">
    <property type="entry name" value="acpS"/>
    <property type="match status" value="1"/>
</dbReference>
<dbReference type="NCBIfam" id="TIGR00556">
    <property type="entry name" value="pantethn_trn"/>
    <property type="match status" value="1"/>
</dbReference>
<dbReference type="Pfam" id="PF01648">
    <property type="entry name" value="ACPS"/>
    <property type="match status" value="1"/>
</dbReference>
<dbReference type="SUPFAM" id="SSF56214">
    <property type="entry name" value="4'-phosphopantetheinyl transferase"/>
    <property type="match status" value="1"/>
</dbReference>
<protein>
    <recommendedName>
        <fullName evidence="1">Holo-[acyl-carrier-protein] synthase</fullName>
        <shortName evidence="1">Holo-ACP synthase</shortName>
        <ecNumber evidence="1">2.7.8.7</ecNumber>
    </recommendedName>
    <alternativeName>
        <fullName evidence="1">4'-phosphopantetheinyl transferase AcpS</fullName>
    </alternativeName>
</protein>
<sequence length="119" mass="13268">MIVGHGIDLQEIEAITKAYERNQRFAERVLTEQELLLFKGISNPKRQMSFLTGRWAAKEAYSKALGTGIGKVNFHDIEILSDDKGAPLITKEPFNGKSFVSISHSGNYAQASVILEEEK</sequence>
<reference key="1">
    <citation type="journal article" date="2002" name="Proc. Natl. Acad. Sci. U.S.A.">
        <title>Complete genome sequence and comparative genomic analysis of an emerging human pathogen, serotype V Streptococcus agalactiae.</title>
        <authorList>
            <person name="Tettelin H."/>
            <person name="Masignani V."/>
            <person name="Cieslewicz M.J."/>
            <person name="Eisen J.A."/>
            <person name="Peterson S.N."/>
            <person name="Wessels M.R."/>
            <person name="Paulsen I.T."/>
            <person name="Nelson K.E."/>
            <person name="Margarit I."/>
            <person name="Read T.D."/>
            <person name="Madoff L.C."/>
            <person name="Wolf A.M."/>
            <person name="Beanan M.J."/>
            <person name="Brinkac L.M."/>
            <person name="Daugherty S.C."/>
            <person name="DeBoy R.T."/>
            <person name="Durkin A.S."/>
            <person name="Kolonay J.F."/>
            <person name="Madupu R."/>
            <person name="Lewis M.R."/>
            <person name="Radune D."/>
            <person name="Fedorova N.B."/>
            <person name="Scanlan D."/>
            <person name="Khouri H.M."/>
            <person name="Mulligan S."/>
            <person name="Carty H.A."/>
            <person name="Cline R.T."/>
            <person name="Van Aken S.E."/>
            <person name="Gill J."/>
            <person name="Scarselli M."/>
            <person name="Mora M."/>
            <person name="Iacobini E.T."/>
            <person name="Brettoni C."/>
            <person name="Galli G."/>
            <person name="Mariani M."/>
            <person name="Vegni F."/>
            <person name="Maione D."/>
            <person name="Rinaudo D."/>
            <person name="Rappuoli R."/>
            <person name="Telford J.L."/>
            <person name="Kasper D.L."/>
            <person name="Grandi G."/>
            <person name="Fraser C.M."/>
        </authorList>
    </citation>
    <scope>NUCLEOTIDE SEQUENCE [LARGE SCALE GENOMIC DNA]</scope>
    <source>
        <strain>ATCC BAA-611 / 2603 V/R</strain>
    </source>
</reference>
<comment type="function">
    <text evidence="1">Transfers the 4'-phosphopantetheine moiety from coenzyme A to a Ser of acyl-carrier-protein.</text>
</comment>
<comment type="catalytic activity">
    <reaction evidence="1">
        <text>apo-[ACP] + CoA = holo-[ACP] + adenosine 3',5'-bisphosphate + H(+)</text>
        <dbReference type="Rhea" id="RHEA:12068"/>
        <dbReference type="Rhea" id="RHEA-COMP:9685"/>
        <dbReference type="Rhea" id="RHEA-COMP:9690"/>
        <dbReference type="ChEBI" id="CHEBI:15378"/>
        <dbReference type="ChEBI" id="CHEBI:29999"/>
        <dbReference type="ChEBI" id="CHEBI:57287"/>
        <dbReference type="ChEBI" id="CHEBI:58343"/>
        <dbReference type="ChEBI" id="CHEBI:64479"/>
        <dbReference type="EC" id="2.7.8.7"/>
    </reaction>
</comment>
<comment type="cofactor">
    <cofactor evidence="1">
        <name>Mg(2+)</name>
        <dbReference type="ChEBI" id="CHEBI:18420"/>
    </cofactor>
</comment>
<comment type="subcellular location">
    <subcellularLocation>
        <location evidence="1">Cytoplasm</location>
    </subcellularLocation>
</comment>
<comment type="similarity">
    <text evidence="1">Belongs to the P-Pant transferase superfamily. AcpS family.</text>
</comment>
<evidence type="ECO:0000255" key="1">
    <source>
        <dbReference type="HAMAP-Rule" id="MF_00101"/>
    </source>
</evidence>
<accession>P63472</accession>
<accession>Q8DY09</accession>
<accession>Q8E3M8</accession>
<organism>
    <name type="scientific">Streptococcus agalactiae serotype V (strain ATCC BAA-611 / 2603 V/R)</name>
    <dbReference type="NCBI Taxonomy" id="208435"/>
    <lineage>
        <taxon>Bacteria</taxon>
        <taxon>Bacillati</taxon>
        <taxon>Bacillota</taxon>
        <taxon>Bacilli</taxon>
        <taxon>Lactobacillales</taxon>
        <taxon>Streptococcaceae</taxon>
        <taxon>Streptococcus</taxon>
    </lineage>
</organism>
<gene>
    <name evidence="1" type="primary">acpS</name>
    <name type="ordered locus">SAG1685</name>
</gene>
<name>ACPS_STRA5</name>
<feature type="chain" id="PRO_0000175709" description="Holo-[acyl-carrier-protein] synthase">
    <location>
        <begin position="1"/>
        <end position="119"/>
    </location>
</feature>
<feature type="binding site" evidence="1">
    <location>
        <position position="8"/>
    </location>
    <ligand>
        <name>Mg(2+)</name>
        <dbReference type="ChEBI" id="CHEBI:18420"/>
    </ligand>
</feature>
<feature type="binding site" evidence="1">
    <location>
        <position position="59"/>
    </location>
    <ligand>
        <name>Mg(2+)</name>
        <dbReference type="ChEBI" id="CHEBI:18420"/>
    </ligand>
</feature>
<proteinExistence type="inferred from homology"/>